<feature type="signal peptide" evidence="3">
    <location>
        <begin position="1"/>
        <end position="21"/>
    </location>
</feature>
<feature type="propeptide" id="PRO_0000453589" evidence="6">
    <location>
        <begin position="22"/>
        <end position="46"/>
    </location>
</feature>
<feature type="peptide" id="PRO_5018135567" description="Alpha-conotoxin-like Am1.6" evidence="4">
    <location>
        <begin position="47"/>
        <end position="63"/>
    </location>
</feature>
<feature type="region of interest" description="Ser-Xaa-Pro motif, crucial for potent interaction with nAChR" evidence="2">
    <location>
        <begin position="50"/>
        <end position="52"/>
    </location>
</feature>
<sequence length="63" mass="6942">MGMRMMFTVFLLVVLATTVVSFTSYRASDGRNAAAKASDLIALTVRDCCSRPPCRWSHPELCS</sequence>
<comment type="function">
    <text evidence="1">Alpha-conotoxins act on postsynaptic membranes, they bind to the nicotinic acetylcholine receptors (nAChR) and thus inhibit them.</text>
</comment>
<comment type="subcellular location">
    <subcellularLocation>
        <location evidence="4">Secreted</location>
    </subcellularLocation>
</comment>
<comment type="tissue specificity">
    <text evidence="6">Expressed by the venom duct.</text>
</comment>
<comment type="domain">
    <text evidence="5">The cysteine framework is I (CC-C-C). Alpha4/7 pattern.</text>
</comment>
<comment type="PTM">
    <text evidence="4">Is not hydroxylated.</text>
</comment>
<comment type="PTM">
    <text evidence="5">Contains 2 disulfide bonds.</text>
</comment>
<comment type="similarity">
    <text evidence="5">Belongs to the conotoxin A superfamily.</text>
</comment>
<dbReference type="EMBL" id="MH282821">
    <property type="protein sequence ID" value="AYP73028.1"/>
    <property type="molecule type" value="mRNA"/>
</dbReference>
<dbReference type="SMR" id="A0A3G3C7U1"/>
<dbReference type="GO" id="GO:0005576">
    <property type="term" value="C:extracellular region"/>
    <property type="evidence" value="ECO:0007669"/>
    <property type="project" value="UniProtKB-SubCell"/>
</dbReference>
<dbReference type="GO" id="GO:0035792">
    <property type="term" value="C:host cell postsynaptic membrane"/>
    <property type="evidence" value="ECO:0007669"/>
    <property type="project" value="UniProtKB-KW"/>
</dbReference>
<dbReference type="GO" id="GO:0030550">
    <property type="term" value="F:acetylcholine receptor inhibitor activity"/>
    <property type="evidence" value="ECO:0007669"/>
    <property type="project" value="UniProtKB-KW"/>
</dbReference>
<dbReference type="GO" id="GO:0090729">
    <property type="term" value="F:toxin activity"/>
    <property type="evidence" value="ECO:0007669"/>
    <property type="project" value="UniProtKB-KW"/>
</dbReference>
<dbReference type="InterPro" id="IPR009958">
    <property type="entry name" value="Conotoxin_a-typ"/>
</dbReference>
<dbReference type="InterPro" id="IPR018072">
    <property type="entry name" value="Conotoxin_a-typ_CS"/>
</dbReference>
<dbReference type="Pfam" id="PF07365">
    <property type="entry name" value="Toxin_8"/>
    <property type="match status" value="1"/>
</dbReference>
<dbReference type="PROSITE" id="PS60014">
    <property type="entry name" value="ALPHA_CONOTOXIN"/>
    <property type="match status" value="1"/>
</dbReference>
<name>CA16_CONAA</name>
<accession>A0A3G3C7U1</accession>
<organism>
    <name type="scientific">Conus amadis</name>
    <name type="common">Amadis cone</name>
    <dbReference type="NCBI Taxonomy" id="198732"/>
    <lineage>
        <taxon>Eukaryota</taxon>
        <taxon>Metazoa</taxon>
        <taxon>Spiralia</taxon>
        <taxon>Lophotrochozoa</taxon>
        <taxon>Mollusca</taxon>
        <taxon>Gastropoda</taxon>
        <taxon>Caenogastropoda</taxon>
        <taxon>Neogastropoda</taxon>
        <taxon>Conoidea</taxon>
        <taxon>Conidae</taxon>
        <taxon>Conus</taxon>
        <taxon>Leptoconus</taxon>
    </lineage>
</organism>
<protein>
    <recommendedName>
        <fullName evidence="5">Alpha-conotoxin-like Am1.6</fullName>
    </recommendedName>
</protein>
<keyword id="KW-0008">Acetylcholine receptor inhibiting toxin</keyword>
<keyword id="KW-0903">Direct protein sequencing</keyword>
<keyword id="KW-1015">Disulfide bond</keyword>
<keyword id="KW-0528">Neurotoxin</keyword>
<keyword id="KW-0629">Postsynaptic neurotoxin</keyword>
<keyword id="KW-0964">Secreted</keyword>
<keyword id="KW-0732">Signal</keyword>
<keyword id="KW-0800">Toxin</keyword>
<evidence type="ECO:0000250" key="1">
    <source>
        <dbReference type="UniProtKB" id="P0CE73"/>
    </source>
</evidence>
<evidence type="ECO:0000250" key="2">
    <source>
        <dbReference type="UniProtKB" id="P56636"/>
    </source>
</evidence>
<evidence type="ECO:0000255" key="3"/>
<evidence type="ECO:0000269" key="4">
    <source>
    </source>
</evidence>
<evidence type="ECO:0000305" key="5"/>
<evidence type="ECO:0000305" key="6">
    <source>
    </source>
</evidence>
<reference key="1">
    <citation type="journal article" date="2019" name="J. Proteomics">
        <title>Cone snail prolyl-4-hydroxylase alpha-subunit sequences derived from transcriptomic data and mass spectrometric analysis of variable proline hydroxylation in C. amadis venom.</title>
        <authorList>
            <person name="Vijayasarathy M."/>
            <person name="Balaram P."/>
        </authorList>
    </citation>
    <scope>NUCLEOTIDE SEQUENCE [MRNA]</scope>
    <scope>PROTEIN SEQUENCE OF 47-63</scope>
    <scope>SUBCELLULAR LOCATION</scope>
    <scope>IDENTIFICATION BY MASS SPECTROMETRY</scope>
    <source>
        <tissue>Venom</tissue>
        <tissue>Venom duct</tissue>
    </source>
</reference>
<proteinExistence type="evidence at protein level"/>